<organism>
    <name type="scientific">Mycolicibacterium parafortuitum</name>
    <name type="common">Mycobacterium parafortuitum</name>
    <dbReference type="NCBI Taxonomy" id="39692"/>
    <lineage>
        <taxon>Bacteria</taxon>
        <taxon>Bacillati</taxon>
        <taxon>Actinomycetota</taxon>
        <taxon>Actinomycetes</taxon>
        <taxon>Mycobacteriales</taxon>
        <taxon>Mycobacteriaceae</taxon>
        <taxon>Mycolicibacterium</taxon>
    </lineage>
</organism>
<accession>Q93AU4</accession>
<sequence>MATERNRRRKGSYPQLPPAPDDYPTFPDKSTWPVVFPEIPAGTNGRFARPPQHTSKEAAPQIPADQVPQHVAVVMDGNGRWATQRGLGRTEGHKMGEAVLIDITCGAIEIGIKHLTVYAFSTENWKRSTEEVRFLMGFNREVVRRRRENLNDMGVRMRWVGSRPRMWSSVIKEFDIAEQMTVDNDVITINYCVNYGGRTEIVEAARELAQEAVDGKIKPNRISEAQFAKHLHRSDIPDVDLFIRTSGEQRASNFLLWQAAYAEYVFQDKLWPDYDRRDLWAACEEYVQRNRRFGRA</sequence>
<gene>
    <name evidence="1" type="primary">uppS</name>
</gene>
<name>ISPT_MYCPF</name>
<dbReference type="EC" id="2.5.1.-" evidence="1"/>
<dbReference type="EMBL" id="AF416720">
    <property type="protein sequence ID" value="AAL11543.1"/>
    <property type="molecule type" value="Genomic_DNA"/>
</dbReference>
<dbReference type="RefSeq" id="WP_104863306.1">
    <property type="nucleotide sequence ID" value="NZ_AP022598.1"/>
</dbReference>
<dbReference type="SMR" id="Q93AU4"/>
<dbReference type="STRING" id="39692.BST38_20105"/>
<dbReference type="GO" id="GO:0005829">
    <property type="term" value="C:cytosol"/>
    <property type="evidence" value="ECO:0007669"/>
    <property type="project" value="TreeGrafter"/>
</dbReference>
<dbReference type="GO" id="GO:0005886">
    <property type="term" value="C:plasma membrane"/>
    <property type="evidence" value="ECO:0007669"/>
    <property type="project" value="TreeGrafter"/>
</dbReference>
<dbReference type="GO" id="GO:0008834">
    <property type="term" value="F:ditrans,polycis-undecaprenyl-diphosphate synthase [(2E,6E)-farnesyl-diphosphate specific] activity"/>
    <property type="evidence" value="ECO:0007669"/>
    <property type="project" value="TreeGrafter"/>
</dbReference>
<dbReference type="GO" id="GO:0000287">
    <property type="term" value="F:magnesium ion binding"/>
    <property type="evidence" value="ECO:0007669"/>
    <property type="project" value="UniProtKB-UniRule"/>
</dbReference>
<dbReference type="GO" id="GO:0030145">
    <property type="term" value="F:manganese ion binding"/>
    <property type="evidence" value="ECO:0007669"/>
    <property type="project" value="TreeGrafter"/>
</dbReference>
<dbReference type="GO" id="GO:0033850">
    <property type="term" value="F:Z-farnesyl diphosphate synthase activity"/>
    <property type="evidence" value="ECO:0007669"/>
    <property type="project" value="TreeGrafter"/>
</dbReference>
<dbReference type="GO" id="GO:0016094">
    <property type="term" value="P:polyprenol biosynthetic process"/>
    <property type="evidence" value="ECO:0007669"/>
    <property type="project" value="TreeGrafter"/>
</dbReference>
<dbReference type="CDD" id="cd00475">
    <property type="entry name" value="Cis_IPPS"/>
    <property type="match status" value="1"/>
</dbReference>
<dbReference type="FunFam" id="3.40.1180.10:FF:000004">
    <property type="entry name" value="Isoprenyl transferase"/>
    <property type="match status" value="1"/>
</dbReference>
<dbReference type="Gene3D" id="3.40.1180.10">
    <property type="entry name" value="Decaprenyl diphosphate synthase-like"/>
    <property type="match status" value="1"/>
</dbReference>
<dbReference type="HAMAP" id="MF_01139">
    <property type="entry name" value="ISPT"/>
    <property type="match status" value="1"/>
</dbReference>
<dbReference type="InterPro" id="IPR001441">
    <property type="entry name" value="UPP_synth-like"/>
</dbReference>
<dbReference type="InterPro" id="IPR018520">
    <property type="entry name" value="UPP_synth-like_CS"/>
</dbReference>
<dbReference type="InterPro" id="IPR036424">
    <property type="entry name" value="UPP_synth-like_sf"/>
</dbReference>
<dbReference type="NCBIfam" id="NF011402">
    <property type="entry name" value="PRK14827.1"/>
    <property type="match status" value="1"/>
</dbReference>
<dbReference type="NCBIfam" id="NF011404">
    <property type="entry name" value="PRK14829.1"/>
    <property type="match status" value="1"/>
</dbReference>
<dbReference type="NCBIfam" id="TIGR00055">
    <property type="entry name" value="uppS"/>
    <property type="match status" value="1"/>
</dbReference>
<dbReference type="PANTHER" id="PTHR10291:SF0">
    <property type="entry name" value="DEHYDRODOLICHYL DIPHOSPHATE SYNTHASE 2"/>
    <property type="match status" value="1"/>
</dbReference>
<dbReference type="PANTHER" id="PTHR10291">
    <property type="entry name" value="DEHYDRODOLICHYL DIPHOSPHATE SYNTHASE FAMILY MEMBER"/>
    <property type="match status" value="1"/>
</dbReference>
<dbReference type="Pfam" id="PF01255">
    <property type="entry name" value="Prenyltransf"/>
    <property type="match status" value="1"/>
</dbReference>
<dbReference type="SUPFAM" id="SSF64005">
    <property type="entry name" value="Undecaprenyl diphosphate synthase"/>
    <property type="match status" value="1"/>
</dbReference>
<dbReference type="PROSITE" id="PS01066">
    <property type="entry name" value="UPP_SYNTHASE"/>
    <property type="match status" value="1"/>
</dbReference>
<evidence type="ECO:0000255" key="1">
    <source>
        <dbReference type="HAMAP-Rule" id="MF_01139"/>
    </source>
</evidence>
<evidence type="ECO:0000256" key="2">
    <source>
        <dbReference type="SAM" id="MobiDB-lite"/>
    </source>
</evidence>
<reference key="1">
    <citation type="submission" date="2001-09" db="EMBL/GenBank/DDBJ databases">
        <title>Towards a chromogenic reporter system for Rhodococcus: a cloned Mycobacterial undecaprenyl diphosphate synthase gene inhibits Rhodococcal colored pigment production.</title>
        <authorList>
            <person name="Matsoso L.G."/>
            <person name="Chait M.R."/>
            <person name="Quan S."/>
            <person name="Dabbs E.R."/>
            <person name="Yazawa K."/>
            <person name="Mikami Y."/>
        </authorList>
    </citation>
    <scope>NUCLEOTIDE SEQUENCE [GENOMIC DNA]</scope>
</reference>
<protein>
    <recommendedName>
        <fullName evidence="1">Isoprenyl transferase</fullName>
        <ecNumber evidence="1">2.5.1.-</ecNumber>
    </recommendedName>
</protein>
<comment type="function">
    <text evidence="1">Catalyzes the condensation of isopentenyl diphosphate (IPP) with allylic pyrophosphates generating different type of terpenoids.</text>
</comment>
<comment type="cofactor">
    <cofactor evidence="1">
        <name>Mg(2+)</name>
        <dbReference type="ChEBI" id="CHEBI:18420"/>
    </cofactor>
    <text evidence="1">Binds 2 magnesium ions per subunit.</text>
</comment>
<comment type="subunit">
    <text evidence="1">Homodimer.</text>
</comment>
<comment type="similarity">
    <text evidence="1">Belongs to the UPP synthase family.</text>
</comment>
<proteinExistence type="inferred from homology"/>
<feature type="chain" id="PRO_0000123640" description="Isoprenyl transferase">
    <location>
        <begin position="1"/>
        <end position="296"/>
    </location>
</feature>
<feature type="region of interest" description="Disordered" evidence="2">
    <location>
        <begin position="1"/>
        <end position="29"/>
    </location>
</feature>
<feature type="compositionally biased region" description="Basic residues" evidence="2">
    <location>
        <begin position="1"/>
        <end position="11"/>
    </location>
</feature>
<feature type="active site" evidence="1">
    <location>
        <position position="76"/>
    </location>
</feature>
<feature type="active site" description="Proton acceptor" evidence="1">
    <location>
        <position position="124"/>
    </location>
</feature>
<feature type="binding site" evidence="1">
    <location>
        <position position="76"/>
    </location>
    <ligand>
        <name>Mg(2+)</name>
        <dbReference type="ChEBI" id="CHEBI:18420"/>
    </ligand>
</feature>
<feature type="binding site" evidence="1">
    <location>
        <begin position="77"/>
        <end position="80"/>
    </location>
    <ligand>
        <name>substrate</name>
    </ligand>
</feature>
<feature type="binding site" evidence="1">
    <location>
        <position position="81"/>
    </location>
    <ligand>
        <name>substrate</name>
    </ligand>
</feature>
<feature type="binding site" evidence="1">
    <location>
        <position position="89"/>
    </location>
    <ligand>
        <name>substrate</name>
    </ligand>
</feature>
<feature type="binding site" evidence="1">
    <location>
        <position position="93"/>
    </location>
    <ligand>
        <name>substrate</name>
    </ligand>
</feature>
<feature type="binding site" evidence="1">
    <location>
        <begin position="121"/>
        <end position="123"/>
    </location>
    <ligand>
        <name>substrate</name>
    </ligand>
</feature>
<feature type="binding site" evidence="1">
    <location>
        <position position="125"/>
    </location>
    <ligand>
        <name>substrate</name>
    </ligand>
</feature>
<feature type="binding site" evidence="1">
    <location>
        <position position="127"/>
    </location>
    <ligand>
        <name>substrate</name>
    </ligand>
</feature>
<feature type="binding site" evidence="1">
    <location>
        <position position="244"/>
    </location>
    <ligand>
        <name>substrate</name>
    </ligand>
</feature>
<feature type="binding site" evidence="1">
    <location>
        <begin position="250"/>
        <end position="252"/>
    </location>
    <ligand>
        <name>substrate</name>
    </ligand>
</feature>
<feature type="binding site" evidence="1">
    <location>
        <position position="263"/>
    </location>
    <ligand>
        <name>Mg(2+)</name>
        <dbReference type="ChEBI" id="CHEBI:18420"/>
    </ligand>
</feature>
<keyword id="KW-0460">Magnesium</keyword>
<keyword id="KW-0479">Metal-binding</keyword>
<keyword id="KW-0808">Transferase</keyword>